<evidence type="ECO:0000255" key="1">
    <source>
        <dbReference type="HAMAP-Rule" id="MF_00766"/>
    </source>
</evidence>
<gene>
    <name evidence="1" type="primary">mtgA</name>
    <name type="ordered locus">YpsIP31758_0471</name>
</gene>
<sequence length="241" mass="27125">MISVRRGFSQLWYWGKRGVIGIIALWMAGILIFAFLPVPFSMVMIERQLGAWLTGDFAYVAHSDWVPMDEISPYMVLAVMAAEDQKFPDHWGFDVGAIESALSHNQRNQKRIRGASTLSQQTAKNVFLWDGRSWVRKGLEVGLTAGIELIWTKRRILTVYLNIAEFGNGIFGVEAAARHFFNKPASKLSASEAALLAAVLPNPLRFKVNAPSGYVISRQQWILRQMHQLGGKTFLQENTLD</sequence>
<accession>A7FDY6</accession>
<reference key="1">
    <citation type="journal article" date="2007" name="PLoS Genet.">
        <title>The complete genome sequence of Yersinia pseudotuberculosis IP31758, the causative agent of Far East scarlet-like fever.</title>
        <authorList>
            <person name="Eppinger M."/>
            <person name="Rosovitz M.J."/>
            <person name="Fricke W.F."/>
            <person name="Rasko D.A."/>
            <person name="Kokorina G."/>
            <person name="Fayolle C."/>
            <person name="Lindler L.E."/>
            <person name="Carniel E."/>
            <person name="Ravel J."/>
        </authorList>
    </citation>
    <scope>NUCLEOTIDE SEQUENCE [LARGE SCALE GENOMIC DNA]</scope>
    <source>
        <strain>IP 31758</strain>
    </source>
</reference>
<proteinExistence type="inferred from homology"/>
<dbReference type="EC" id="2.4.99.28" evidence="1"/>
<dbReference type="EMBL" id="CP000720">
    <property type="protein sequence ID" value="ABS49514.1"/>
    <property type="molecule type" value="Genomic_DNA"/>
</dbReference>
<dbReference type="RefSeq" id="WP_012104421.1">
    <property type="nucleotide sequence ID" value="NC_009708.1"/>
</dbReference>
<dbReference type="SMR" id="A7FDY6"/>
<dbReference type="CAZy" id="GT51">
    <property type="family name" value="Glycosyltransferase Family 51"/>
</dbReference>
<dbReference type="KEGG" id="ypi:YpsIP31758_0471"/>
<dbReference type="HOGENOM" id="CLU_006354_1_1_6"/>
<dbReference type="UniPathway" id="UPA00219"/>
<dbReference type="Proteomes" id="UP000002412">
    <property type="component" value="Chromosome"/>
</dbReference>
<dbReference type="GO" id="GO:0009274">
    <property type="term" value="C:peptidoglycan-based cell wall"/>
    <property type="evidence" value="ECO:0007669"/>
    <property type="project" value="InterPro"/>
</dbReference>
<dbReference type="GO" id="GO:0005886">
    <property type="term" value="C:plasma membrane"/>
    <property type="evidence" value="ECO:0007669"/>
    <property type="project" value="UniProtKB-SubCell"/>
</dbReference>
<dbReference type="GO" id="GO:0016763">
    <property type="term" value="F:pentosyltransferase activity"/>
    <property type="evidence" value="ECO:0007669"/>
    <property type="project" value="InterPro"/>
</dbReference>
<dbReference type="GO" id="GO:0008955">
    <property type="term" value="F:peptidoglycan glycosyltransferase activity"/>
    <property type="evidence" value="ECO:0007669"/>
    <property type="project" value="UniProtKB-UniRule"/>
</dbReference>
<dbReference type="GO" id="GO:0071555">
    <property type="term" value="P:cell wall organization"/>
    <property type="evidence" value="ECO:0007669"/>
    <property type="project" value="UniProtKB-KW"/>
</dbReference>
<dbReference type="GO" id="GO:0009252">
    <property type="term" value="P:peptidoglycan biosynthetic process"/>
    <property type="evidence" value="ECO:0007669"/>
    <property type="project" value="UniProtKB-UniRule"/>
</dbReference>
<dbReference type="GO" id="GO:0008360">
    <property type="term" value="P:regulation of cell shape"/>
    <property type="evidence" value="ECO:0007669"/>
    <property type="project" value="UniProtKB-KW"/>
</dbReference>
<dbReference type="Gene3D" id="1.10.3810.10">
    <property type="entry name" value="Biosynthetic peptidoglycan transglycosylase-like"/>
    <property type="match status" value="1"/>
</dbReference>
<dbReference type="HAMAP" id="MF_00766">
    <property type="entry name" value="PGT_MtgA"/>
    <property type="match status" value="1"/>
</dbReference>
<dbReference type="InterPro" id="IPR001264">
    <property type="entry name" value="Glyco_trans_51"/>
</dbReference>
<dbReference type="InterPro" id="IPR023346">
    <property type="entry name" value="Lysozyme-like_dom_sf"/>
</dbReference>
<dbReference type="InterPro" id="IPR036950">
    <property type="entry name" value="PBP_transglycosylase"/>
</dbReference>
<dbReference type="InterPro" id="IPR011812">
    <property type="entry name" value="Pep_trsgly"/>
</dbReference>
<dbReference type="NCBIfam" id="TIGR02070">
    <property type="entry name" value="mono_pep_trsgly"/>
    <property type="match status" value="1"/>
</dbReference>
<dbReference type="PANTHER" id="PTHR30400:SF0">
    <property type="entry name" value="BIOSYNTHETIC PEPTIDOGLYCAN TRANSGLYCOSYLASE"/>
    <property type="match status" value="1"/>
</dbReference>
<dbReference type="PANTHER" id="PTHR30400">
    <property type="entry name" value="MONOFUNCTIONAL BIOSYNTHETIC PEPTIDOGLYCAN TRANSGLYCOSYLASE"/>
    <property type="match status" value="1"/>
</dbReference>
<dbReference type="Pfam" id="PF00912">
    <property type="entry name" value="Transgly"/>
    <property type="match status" value="1"/>
</dbReference>
<dbReference type="SUPFAM" id="SSF53955">
    <property type="entry name" value="Lysozyme-like"/>
    <property type="match status" value="1"/>
</dbReference>
<keyword id="KW-0997">Cell inner membrane</keyword>
<keyword id="KW-1003">Cell membrane</keyword>
<keyword id="KW-0133">Cell shape</keyword>
<keyword id="KW-0961">Cell wall biogenesis/degradation</keyword>
<keyword id="KW-0328">Glycosyltransferase</keyword>
<keyword id="KW-0472">Membrane</keyword>
<keyword id="KW-0573">Peptidoglycan synthesis</keyword>
<keyword id="KW-0808">Transferase</keyword>
<keyword id="KW-0812">Transmembrane</keyword>
<keyword id="KW-1133">Transmembrane helix</keyword>
<name>MTGA_YERP3</name>
<feature type="chain" id="PRO_1000062230" description="Biosynthetic peptidoglycan transglycosylase">
    <location>
        <begin position="1"/>
        <end position="241"/>
    </location>
</feature>
<feature type="transmembrane region" description="Helical" evidence="1">
    <location>
        <begin position="18"/>
        <end position="38"/>
    </location>
</feature>
<comment type="function">
    <text evidence="1">Peptidoglycan polymerase that catalyzes glycan chain elongation from lipid-linked precursors.</text>
</comment>
<comment type="catalytic activity">
    <reaction evidence="1">
        <text>[GlcNAc-(1-&gt;4)-Mur2Ac(oyl-L-Ala-gamma-D-Glu-L-Lys-D-Ala-D-Ala)](n)-di-trans,octa-cis-undecaprenyl diphosphate + beta-D-GlcNAc-(1-&gt;4)-Mur2Ac(oyl-L-Ala-gamma-D-Glu-L-Lys-D-Ala-D-Ala)-di-trans,octa-cis-undecaprenyl diphosphate = [GlcNAc-(1-&gt;4)-Mur2Ac(oyl-L-Ala-gamma-D-Glu-L-Lys-D-Ala-D-Ala)](n+1)-di-trans,octa-cis-undecaprenyl diphosphate + di-trans,octa-cis-undecaprenyl diphosphate + H(+)</text>
        <dbReference type="Rhea" id="RHEA:23708"/>
        <dbReference type="Rhea" id="RHEA-COMP:9602"/>
        <dbReference type="Rhea" id="RHEA-COMP:9603"/>
        <dbReference type="ChEBI" id="CHEBI:15378"/>
        <dbReference type="ChEBI" id="CHEBI:58405"/>
        <dbReference type="ChEBI" id="CHEBI:60033"/>
        <dbReference type="ChEBI" id="CHEBI:78435"/>
        <dbReference type="EC" id="2.4.99.28"/>
    </reaction>
</comment>
<comment type="pathway">
    <text evidence="1">Cell wall biogenesis; peptidoglycan biosynthesis.</text>
</comment>
<comment type="subcellular location">
    <subcellularLocation>
        <location evidence="1">Cell inner membrane</location>
        <topology evidence="1">Single-pass membrane protein</topology>
    </subcellularLocation>
</comment>
<comment type="similarity">
    <text evidence="1">Belongs to the glycosyltransferase 51 family.</text>
</comment>
<protein>
    <recommendedName>
        <fullName evidence="1">Biosynthetic peptidoglycan transglycosylase</fullName>
        <ecNumber evidence="1">2.4.99.28</ecNumber>
    </recommendedName>
    <alternativeName>
        <fullName evidence="1">Glycan polymerase</fullName>
    </alternativeName>
    <alternativeName>
        <fullName evidence="1">Peptidoglycan glycosyltransferase MtgA</fullName>
        <shortName evidence="1">PGT</shortName>
    </alternativeName>
</protein>
<organism>
    <name type="scientific">Yersinia pseudotuberculosis serotype O:1b (strain IP 31758)</name>
    <dbReference type="NCBI Taxonomy" id="349747"/>
    <lineage>
        <taxon>Bacteria</taxon>
        <taxon>Pseudomonadati</taxon>
        <taxon>Pseudomonadota</taxon>
        <taxon>Gammaproteobacteria</taxon>
        <taxon>Enterobacterales</taxon>
        <taxon>Yersiniaceae</taxon>
        <taxon>Yersinia</taxon>
    </lineage>
</organism>